<feature type="chain" id="PRO_1000067193" description="UPF0313 protein CPF_1407">
    <location>
        <begin position="1"/>
        <end position="662"/>
    </location>
</feature>
<feature type="domain" description="Radical SAM core" evidence="2">
    <location>
        <begin position="296"/>
        <end position="567"/>
    </location>
</feature>
<feature type="region of interest" description="Disordered" evidence="3">
    <location>
        <begin position="596"/>
        <end position="662"/>
    </location>
</feature>
<feature type="compositionally biased region" description="Basic and acidic residues" evidence="3">
    <location>
        <begin position="618"/>
        <end position="632"/>
    </location>
</feature>
<feature type="compositionally biased region" description="Basic residues" evidence="3">
    <location>
        <begin position="633"/>
        <end position="644"/>
    </location>
</feature>
<feature type="binding site" evidence="1">
    <location>
        <position position="310"/>
    </location>
    <ligand>
        <name>[4Fe-4S] cluster</name>
        <dbReference type="ChEBI" id="CHEBI:49883"/>
        <note>4Fe-4S-S-AdoMet</note>
    </ligand>
</feature>
<feature type="binding site" evidence="1">
    <location>
        <position position="314"/>
    </location>
    <ligand>
        <name>[4Fe-4S] cluster</name>
        <dbReference type="ChEBI" id="CHEBI:49883"/>
        <note>4Fe-4S-S-AdoMet</note>
    </ligand>
</feature>
<feature type="binding site" evidence="1">
    <location>
        <position position="317"/>
    </location>
    <ligand>
        <name>[4Fe-4S] cluster</name>
        <dbReference type="ChEBI" id="CHEBI:49883"/>
        <note>4Fe-4S-S-AdoMet</note>
    </ligand>
</feature>
<sequence>MSENKFLPICKDDMIERGWEQCDFVLVTADAYIDHHSFGTAIISRVLENAGYKVGIIAQPDWKSVDDFKKLGRPRLGFLVNGGNMDPMVNHYTVSKKLRKKDLYTPKGEMGKRPDRATIVYCNKIREAYKDVNIVIGGIEASLRRFAHYDYWDNKVRKSILVDSGADLLVYGMSEKQIVEVADFLNQGFDGKYIRHIPGTCYIADSLDEIYEEHIVLPSFKEVSSDKRTYAECFKIQYDEQDPVRGRTLVQEHNGKYVVINKPEMPLSREELDRVYALPYQKTYHPIYEKDGGIAAIEEVKFSIVSSRGCSGNCSFCAITFHQGRIVTSRSEDSIVEEAEEITKYDDFKGYIHDIGGPTANFRKPACKKQLTLGACKHKRCMSPGICKNMEVDHREYLHLLRRVRKLPGIKKVFIRSGLRYDYIMADKDDTFFKELVEHHVSGQLKVAPEHVSPNVLKYMGKPAGKTYDEFRRKFFRITERLGKKQFIIPYLMSSHPGCKLEDAIMLAEYLRDINYQPEQVQDFYPTPGTLSTTMFYTGLDPLTMEEVYIPRSKEEKAMQRALLQFKNPKNYNIVYDALVKVGREDLIGNGPKCLIRDKNSFGKGNNHSNHKSGGRKSRNENSGRRESEDKKRSSHSKKQRGNKSRGFDQKSQRSSKGKKRR</sequence>
<organism>
    <name type="scientific">Clostridium perfringens (strain ATCC 13124 / DSM 756 / JCM 1290 / NCIMB 6125 / NCTC 8237 / Type A)</name>
    <dbReference type="NCBI Taxonomy" id="195103"/>
    <lineage>
        <taxon>Bacteria</taxon>
        <taxon>Bacillati</taxon>
        <taxon>Bacillota</taxon>
        <taxon>Clostridia</taxon>
        <taxon>Eubacteriales</taxon>
        <taxon>Clostridiaceae</taxon>
        <taxon>Clostridium</taxon>
    </lineage>
</organism>
<proteinExistence type="inferred from homology"/>
<dbReference type="EMBL" id="CP000246">
    <property type="protein sequence ID" value="ABG84851.1"/>
    <property type="molecule type" value="Genomic_DNA"/>
</dbReference>
<dbReference type="RefSeq" id="WP_011590696.1">
    <property type="nucleotide sequence ID" value="NC_008261.1"/>
</dbReference>
<dbReference type="SMR" id="Q0TR88"/>
<dbReference type="STRING" id="195103.CPF_1407"/>
<dbReference type="PaxDb" id="195103-CPF_1407"/>
<dbReference type="KEGG" id="cpf:CPF_1407"/>
<dbReference type="eggNOG" id="COG1032">
    <property type="taxonomic scope" value="Bacteria"/>
</dbReference>
<dbReference type="HOGENOM" id="CLU_018288_2_0_9"/>
<dbReference type="Proteomes" id="UP000001823">
    <property type="component" value="Chromosome"/>
</dbReference>
<dbReference type="GO" id="GO:0051539">
    <property type="term" value="F:4 iron, 4 sulfur cluster binding"/>
    <property type="evidence" value="ECO:0007669"/>
    <property type="project" value="UniProtKB-KW"/>
</dbReference>
<dbReference type="GO" id="GO:0003824">
    <property type="term" value="F:catalytic activity"/>
    <property type="evidence" value="ECO:0007669"/>
    <property type="project" value="InterPro"/>
</dbReference>
<dbReference type="GO" id="GO:0005506">
    <property type="term" value="F:iron ion binding"/>
    <property type="evidence" value="ECO:0007669"/>
    <property type="project" value="UniProtKB-UniRule"/>
</dbReference>
<dbReference type="Gene3D" id="3.80.30.20">
    <property type="entry name" value="tm_1862 like domain"/>
    <property type="match status" value="1"/>
</dbReference>
<dbReference type="HAMAP" id="MF_01251">
    <property type="entry name" value="UPF0313"/>
    <property type="match status" value="1"/>
</dbReference>
<dbReference type="InterPro" id="IPR006638">
    <property type="entry name" value="Elp3/MiaA/NifB-like_rSAM"/>
</dbReference>
<dbReference type="InterPro" id="IPR007197">
    <property type="entry name" value="rSAM"/>
</dbReference>
<dbReference type="InterPro" id="IPR023404">
    <property type="entry name" value="rSAM_horseshoe"/>
</dbReference>
<dbReference type="InterPro" id="IPR022946">
    <property type="entry name" value="UPF0313"/>
</dbReference>
<dbReference type="InterPro" id="IPR024560">
    <property type="entry name" value="UPF0313_C"/>
</dbReference>
<dbReference type="InterPro" id="IPR013704">
    <property type="entry name" value="UPF0313_N"/>
</dbReference>
<dbReference type="NCBIfam" id="TIGR03904">
    <property type="entry name" value="SAM_YgiQ"/>
    <property type="match status" value="1"/>
</dbReference>
<dbReference type="PANTHER" id="PTHR32331">
    <property type="entry name" value="UPF0313 PROTEIN YGIQ"/>
    <property type="match status" value="1"/>
</dbReference>
<dbReference type="PANTHER" id="PTHR32331:SF0">
    <property type="entry name" value="UPF0313 PROTEIN YGIQ"/>
    <property type="match status" value="1"/>
</dbReference>
<dbReference type="Pfam" id="PF11842">
    <property type="entry name" value="DUF3362"/>
    <property type="match status" value="1"/>
</dbReference>
<dbReference type="Pfam" id="PF04055">
    <property type="entry name" value="Radical_SAM"/>
    <property type="match status" value="1"/>
</dbReference>
<dbReference type="Pfam" id="PF08497">
    <property type="entry name" value="Radical_SAM_N"/>
    <property type="match status" value="1"/>
</dbReference>
<dbReference type="SFLD" id="SFLDG01082">
    <property type="entry name" value="B12-binding_domain_containing"/>
    <property type="match status" value="1"/>
</dbReference>
<dbReference type="SFLD" id="SFLDS00029">
    <property type="entry name" value="Radical_SAM"/>
    <property type="match status" value="1"/>
</dbReference>
<dbReference type="SFLD" id="SFLDG01069">
    <property type="entry name" value="UPF0313"/>
    <property type="match status" value="1"/>
</dbReference>
<dbReference type="SMART" id="SM00729">
    <property type="entry name" value="Elp3"/>
    <property type="match status" value="1"/>
</dbReference>
<dbReference type="SUPFAM" id="SSF102114">
    <property type="entry name" value="Radical SAM enzymes"/>
    <property type="match status" value="1"/>
</dbReference>
<dbReference type="PROSITE" id="PS51918">
    <property type="entry name" value="RADICAL_SAM"/>
    <property type="match status" value="1"/>
</dbReference>
<reference key="1">
    <citation type="journal article" date="2006" name="Genome Res.">
        <title>Skewed genomic variability in strains of the toxigenic bacterial pathogen, Clostridium perfringens.</title>
        <authorList>
            <person name="Myers G.S.A."/>
            <person name="Rasko D.A."/>
            <person name="Cheung J.K."/>
            <person name="Ravel J."/>
            <person name="Seshadri R."/>
            <person name="DeBoy R.T."/>
            <person name="Ren Q."/>
            <person name="Varga J."/>
            <person name="Awad M.M."/>
            <person name="Brinkac L.M."/>
            <person name="Daugherty S.C."/>
            <person name="Haft D.H."/>
            <person name="Dodson R.J."/>
            <person name="Madupu R."/>
            <person name="Nelson W.C."/>
            <person name="Rosovitz M.J."/>
            <person name="Sullivan S.A."/>
            <person name="Khouri H."/>
            <person name="Dimitrov G.I."/>
            <person name="Watkins K.L."/>
            <person name="Mulligan S."/>
            <person name="Benton J."/>
            <person name="Radune D."/>
            <person name="Fisher D.J."/>
            <person name="Atkins H.S."/>
            <person name="Hiscox T."/>
            <person name="Jost B.H."/>
            <person name="Billington S.J."/>
            <person name="Songer J.G."/>
            <person name="McClane B.A."/>
            <person name="Titball R.W."/>
            <person name="Rood J.I."/>
            <person name="Melville S.B."/>
            <person name="Paulsen I.T."/>
        </authorList>
    </citation>
    <scope>NUCLEOTIDE SEQUENCE [LARGE SCALE GENOMIC DNA]</scope>
    <source>
        <strain>ATCC 13124 / DSM 756 / JCM 1290 / NCIMB 6125 / NCTC 8237 / S 107 / Type A</strain>
    </source>
</reference>
<name>Y1407_CLOP1</name>
<evidence type="ECO:0000255" key="1">
    <source>
        <dbReference type="HAMAP-Rule" id="MF_01251"/>
    </source>
</evidence>
<evidence type="ECO:0000255" key="2">
    <source>
        <dbReference type="PROSITE-ProRule" id="PRU01266"/>
    </source>
</evidence>
<evidence type="ECO:0000256" key="3">
    <source>
        <dbReference type="SAM" id="MobiDB-lite"/>
    </source>
</evidence>
<protein>
    <recommendedName>
        <fullName evidence="1">UPF0313 protein CPF_1407</fullName>
    </recommendedName>
</protein>
<keyword id="KW-0004">4Fe-4S</keyword>
<keyword id="KW-0408">Iron</keyword>
<keyword id="KW-0411">Iron-sulfur</keyword>
<keyword id="KW-0479">Metal-binding</keyword>
<keyword id="KW-0949">S-adenosyl-L-methionine</keyword>
<gene>
    <name type="ordered locus">CPF_1407</name>
</gene>
<comment type="cofactor">
    <cofactor evidence="1">
        <name>[4Fe-4S] cluster</name>
        <dbReference type="ChEBI" id="CHEBI:49883"/>
    </cofactor>
    <text evidence="1">Binds 1 [4Fe-4S] cluster. The cluster is coordinated with 3 cysteines and an exchangeable S-adenosyl-L-methionine.</text>
</comment>
<comment type="similarity">
    <text evidence="1">Belongs to the UPF0313 family.</text>
</comment>
<accession>Q0TR88</accession>